<accession>Q65HL2</accession>
<accession>Q62T17</accession>
<evidence type="ECO:0000305" key="1"/>
<gene>
    <name type="ordered locus">BLi02578</name>
    <name type="ordered locus">BL01507</name>
</gene>
<keyword id="KW-1185">Reference proteome</keyword>
<reference key="1">
    <citation type="journal article" date="2004" name="J. Mol. Microbiol. Biotechnol.">
        <title>The complete genome sequence of Bacillus licheniformis DSM13, an organism with great industrial potential.</title>
        <authorList>
            <person name="Veith B."/>
            <person name="Herzberg C."/>
            <person name="Steckel S."/>
            <person name="Feesche J."/>
            <person name="Maurer K.H."/>
            <person name="Ehrenreich P."/>
            <person name="Baeumer S."/>
            <person name="Henne A."/>
            <person name="Liesegang H."/>
            <person name="Merkl R."/>
            <person name="Ehrenreich A."/>
            <person name="Gottschalk G."/>
        </authorList>
    </citation>
    <scope>NUCLEOTIDE SEQUENCE [LARGE SCALE GENOMIC DNA]</scope>
    <source>
        <strain>ATCC 14580 / DSM 13 / JCM 2505 / CCUG 7422 / NBRC 12200 / NCIMB 9375 / NCTC 10341 / NRRL NRS-1264 / Gibson 46</strain>
    </source>
</reference>
<reference key="2">
    <citation type="journal article" date="2004" name="Genome Biol.">
        <title>Complete genome sequence of the industrial bacterium Bacillus licheniformis and comparisons with closely related Bacillus species.</title>
        <authorList>
            <person name="Rey M.W."/>
            <person name="Ramaiya P."/>
            <person name="Nelson B.A."/>
            <person name="Brody-Karpin S.D."/>
            <person name="Zaretsky E.J."/>
            <person name="Tang M."/>
            <person name="Lopez de Leon A."/>
            <person name="Xiang H."/>
            <person name="Gusti V."/>
            <person name="Clausen I.G."/>
            <person name="Olsen P.B."/>
            <person name="Rasmussen M.D."/>
            <person name="Andersen J.T."/>
            <person name="Joergensen P.L."/>
            <person name="Larsen T.S."/>
            <person name="Sorokin A."/>
            <person name="Bolotin A."/>
            <person name="Lapidus A."/>
            <person name="Galleron N."/>
            <person name="Ehrlich S.D."/>
            <person name="Berka R.M."/>
        </authorList>
    </citation>
    <scope>NUCLEOTIDE SEQUENCE [LARGE SCALE GENOMIC DNA]</scope>
    <source>
        <strain>ATCC 14580 / DSM 13 / JCM 2505 / CCUG 7422 / NBRC 12200 / NCIMB 9375 / NCTC 10341 / NRRL NRS-1264 / Gibson 46</strain>
    </source>
</reference>
<name>Y2578_BACLD</name>
<proteinExistence type="inferred from homology"/>
<sequence>MNMDFNLFMNDVVRQARQEITAAGYTELKTPEEVDEALTKKGTTLVMVNSVCGCAGGIARPAAHHAVHYDKRPDHLVTVFAGQDKEATARAREYFEGYPPSSPSFALLKDGKILKMVERHEIEGYEPMAVITKLQGLFEEYCEEV</sequence>
<comment type="similarity">
    <text evidence="1">Belongs to the bacilliredoxin family.</text>
</comment>
<protein>
    <recommendedName>
        <fullName evidence="1">Bacilliredoxin BLi02578/BL01507</fullName>
    </recommendedName>
</protein>
<dbReference type="EMBL" id="AE017333">
    <property type="protein sequence ID" value="AAU41452.1"/>
    <property type="molecule type" value="Genomic_DNA"/>
</dbReference>
<dbReference type="EMBL" id="CP000002">
    <property type="protein sequence ID" value="AAU24092.1"/>
    <property type="molecule type" value="Genomic_DNA"/>
</dbReference>
<dbReference type="RefSeq" id="WP_003183325.1">
    <property type="nucleotide sequence ID" value="NC_006322.1"/>
</dbReference>
<dbReference type="SMR" id="Q65HL2"/>
<dbReference type="STRING" id="279010.BL01507"/>
<dbReference type="KEGG" id="bld:BLi02578"/>
<dbReference type="KEGG" id="bli:BL01507"/>
<dbReference type="eggNOG" id="ENOG502ZBVN">
    <property type="taxonomic scope" value="Bacteria"/>
</dbReference>
<dbReference type="HOGENOM" id="CLU_132521_0_0_9"/>
<dbReference type="Proteomes" id="UP000000606">
    <property type="component" value="Chromosome"/>
</dbReference>
<dbReference type="GO" id="GO:0045454">
    <property type="term" value="P:cell redox homeostasis"/>
    <property type="evidence" value="ECO:0000250"/>
    <property type="project" value="UniProtKB"/>
</dbReference>
<dbReference type="Gene3D" id="3.40.30.10">
    <property type="entry name" value="Glutaredoxin"/>
    <property type="match status" value="1"/>
</dbReference>
<dbReference type="InterPro" id="IPR009474">
    <property type="entry name" value="BrxB/BrxA"/>
</dbReference>
<dbReference type="NCBIfam" id="TIGR04191">
    <property type="entry name" value="YphP_YqiW"/>
    <property type="match status" value="1"/>
</dbReference>
<dbReference type="PANTHER" id="PTHR40052:SF1">
    <property type="entry name" value="BACILLIREDOXIN BRXB"/>
    <property type="match status" value="1"/>
</dbReference>
<dbReference type="PANTHER" id="PTHR40052">
    <property type="entry name" value="UPF0403 PROTEIN YQIW-RELATED"/>
    <property type="match status" value="1"/>
</dbReference>
<dbReference type="Pfam" id="PF06491">
    <property type="entry name" value="Disulph_isomer"/>
    <property type="match status" value="1"/>
</dbReference>
<organism>
    <name type="scientific">Bacillus licheniformis (strain ATCC 14580 / DSM 13 / JCM 2505 / CCUG 7422 / NBRC 12200 / NCIMB 9375 / NCTC 10341 / NRRL NRS-1264 / Gibson 46)</name>
    <dbReference type="NCBI Taxonomy" id="279010"/>
    <lineage>
        <taxon>Bacteria</taxon>
        <taxon>Bacillati</taxon>
        <taxon>Bacillota</taxon>
        <taxon>Bacilli</taxon>
        <taxon>Bacillales</taxon>
        <taxon>Bacillaceae</taxon>
        <taxon>Bacillus</taxon>
    </lineage>
</organism>
<feature type="chain" id="PRO_0000271986" description="Bacilliredoxin BLi02578/BL01507">
    <location>
        <begin position="1"/>
        <end position="145"/>
    </location>
</feature>